<reference key="1">
    <citation type="journal article" date="2006" name="Proc. Natl. Acad. Sci. U.S.A.">
        <title>Molecular genetic anatomy of inter- and intraserotype variation in the human bacterial pathogen group A Streptococcus.</title>
        <authorList>
            <person name="Beres S.B."/>
            <person name="Richter E.W."/>
            <person name="Nagiec M.J."/>
            <person name="Sumby P."/>
            <person name="Porcella S.F."/>
            <person name="DeLeo F.R."/>
            <person name="Musser J.M."/>
        </authorList>
    </citation>
    <scope>NUCLEOTIDE SEQUENCE [LARGE SCALE GENOMIC DNA]</scope>
    <source>
        <strain>MGAS10270</strain>
    </source>
</reference>
<gene>
    <name evidence="1" type="primary">ruvB</name>
    <name type="ordered locus">MGAS10270_Spy0037</name>
</gene>
<keyword id="KW-0067">ATP-binding</keyword>
<keyword id="KW-0963">Cytoplasm</keyword>
<keyword id="KW-0227">DNA damage</keyword>
<keyword id="KW-0233">DNA recombination</keyword>
<keyword id="KW-0234">DNA repair</keyword>
<keyword id="KW-0238">DNA-binding</keyword>
<keyword id="KW-0378">Hydrolase</keyword>
<keyword id="KW-0547">Nucleotide-binding</keyword>
<feature type="chain" id="PRO_1000001486" description="Holliday junction branch migration complex subunit RuvB">
    <location>
        <begin position="1"/>
        <end position="332"/>
    </location>
</feature>
<feature type="region of interest" description="Large ATPase domain (RuvB-L)" evidence="1">
    <location>
        <begin position="1"/>
        <end position="181"/>
    </location>
</feature>
<feature type="region of interest" description="Small ATPAse domain (RuvB-S)" evidence="1">
    <location>
        <begin position="182"/>
        <end position="252"/>
    </location>
</feature>
<feature type="region of interest" description="Head domain (RuvB-H)" evidence="1">
    <location>
        <begin position="255"/>
        <end position="332"/>
    </location>
</feature>
<feature type="binding site" evidence="1">
    <location>
        <position position="20"/>
    </location>
    <ligand>
        <name>ATP</name>
        <dbReference type="ChEBI" id="CHEBI:30616"/>
    </ligand>
</feature>
<feature type="binding site" evidence="1">
    <location>
        <position position="21"/>
    </location>
    <ligand>
        <name>ATP</name>
        <dbReference type="ChEBI" id="CHEBI:30616"/>
    </ligand>
</feature>
<feature type="binding site" evidence="1">
    <location>
        <position position="62"/>
    </location>
    <ligand>
        <name>ATP</name>
        <dbReference type="ChEBI" id="CHEBI:30616"/>
    </ligand>
</feature>
<feature type="binding site" evidence="1">
    <location>
        <position position="65"/>
    </location>
    <ligand>
        <name>ATP</name>
        <dbReference type="ChEBI" id="CHEBI:30616"/>
    </ligand>
</feature>
<feature type="binding site" evidence="1">
    <location>
        <position position="66"/>
    </location>
    <ligand>
        <name>ATP</name>
        <dbReference type="ChEBI" id="CHEBI:30616"/>
    </ligand>
</feature>
<feature type="binding site" evidence="1">
    <location>
        <position position="66"/>
    </location>
    <ligand>
        <name>Mg(2+)</name>
        <dbReference type="ChEBI" id="CHEBI:18420"/>
    </ligand>
</feature>
<feature type="binding site" evidence="1">
    <location>
        <position position="67"/>
    </location>
    <ligand>
        <name>ATP</name>
        <dbReference type="ChEBI" id="CHEBI:30616"/>
    </ligand>
</feature>
<feature type="binding site" evidence="1">
    <location>
        <begin position="128"/>
        <end position="130"/>
    </location>
    <ligand>
        <name>ATP</name>
        <dbReference type="ChEBI" id="CHEBI:30616"/>
    </ligand>
</feature>
<feature type="binding site" evidence="1">
    <location>
        <position position="171"/>
    </location>
    <ligand>
        <name>ATP</name>
        <dbReference type="ChEBI" id="CHEBI:30616"/>
    </ligand>
</feature>
<feature type="binding site" evidence="1">
    <location>
        <position position="181"/>
    </location>
    <ligand>
        <name>ATP</name>
        <dbReference type="ChEBI" id="CHEBI:30616"/>
    </ligand>
</feature>
<feature type="binding site" evidence="1">
    <location>
        <position position="218"/>
    </location>
    <ligand>
        <name>ATP</name>
        <dbReference type="ChEBI" id="CHEBI:30616"/>
    </ligand>
</feature>
<feature type="binding site" evidence="1">
    <location>
        <position position="291"/>
    </location>
    <ligand>
        <name>DNA</name>
        <dbReference type="ChEBI" id="CHEBI:16991"/>
    </ligand>
</feature>
<feature type="binding site" evidence="1">
    <location>
        <position position="310"/>
    </location>
    <ligand>
        <name>DNA</name>
        <dbReference type="ChEBI" id="CHEBI:16991"/>
    </ligand>
</feature>
<feature type="binding site" evidence="1">
    <location>
        <position position="312"/>
    </location>
    <ligand>
        <name>DNA</name>
        <dbReference type="ChEBI" id="CHEBI:16991"/>
    </ligand>
</feature>
<feature type="binding site" evidence="1">
    <location>
        <position position="315"/>
    </location>
    <ligand>
        <name>DNA</name>
        <dbReference type="ChEBI" id="CHEBI:16991"/>
    </ligand>
</feature>
<accession>Q1JJ71</accession>
<comment type="function">
    <text evidence="1">The RuvA-RuvB-RuvC complex processes Holliday junction (HJ) DNA during genetic recombination and DNA repair, while the RuvA-RuvB complex plays an important role in the rescue of blocked DNA replication forks via replication fork reversal (RFR). RuvA specifically binds to HJ cruciform DNA, conferring on it an open structure. The RuvB hexamer acts as an ATP-dependent pump, pulling dsDNA into and through the RuvAB complex. RuvB forms 2 homohexamers on either side of HJ DNA bound by 1 or 2 RuvA tetramers; 4 subunits per hexamer contact DNA at a time. Coordinated motions by a converter formed by DNA-disengaged RuvB subunits stimulates ATP hydrolysis and nucleotide exchange. Immobilization of the converter enables RuvB to convert the ATP-contained energy into a lever motion, pulling 2 nucleotides of DNA out of the RuvA tetramer per ATP hydrolyzed, thus driving DNA branch migration. The RuvB motors rotate together with the DNA substrate, which together with the progressing nucleotide cycle form the mechanistic basis for DNA recombination by continuous HJ branch migration. Branch migration allows RuvC to scan DNA until it finds its consensus sequence, where it cleaves and resolves cruciform DNA.</text>
</comment>
<comment type="catalytic activity">
    <reaction evidence="1">
        <text>ATP + H2O = ADP + phosphate + H(+)</text>
        <dbReference type="Rhea" id="RHEA:13065"/>
        <dbReference type="ChEBI" id="CHEBI:15377"/>
        <dbReference type="ChEBI" id="CHEBI:15378"/>
        <dbReference type="ChEBI" id="CHEBI:30616"/>
        <dbReference type="ChEBI" id="CHEBI:43474"/>
        <dbReference type="ChEBI" id="CHEBI:456216"/>
    </reaction>
</comment>
<comment type="subunit">
    <text evidence="1">Homohexamer. Forms an RuvA(8)-RuvB(12)-Holliday junction (HJ) complex. HJ DNA is sandwiched between 2 RuvA tetramers; dsDNA enters through RuvA and exits via RuvB. An RuvB hexamer assembles on each DNA strand where it exits the tetramer. Each RuvB hexamer is contacted by two RuvA subunits (via domain III) on 2 adjacent RuvB subunits; this complex drives branch migration. In the full resolvosome a probable DNA-RuvA(4)-RuvB(12)-RuvC(2) complex forms which resolves the HJ.</text>
</comment>
<comment type="subcellular location">
    <subcellularLocation>
        <location evidence="1">Cytoplasm</location>
    </subcellularLocation>
</comment>
<comment type="domain">
    <text evidence="1">Has 3 domains, the large (RuvB-L) and small ATPase (RuvB-S) domains and the C-terminal head (RuvB-H) domain. The head domain binds DNA, while the ATPase domains jointly bind ATP, ADP or are empty depending on the state of the subunit in the translocation cycle. During a single DNA translocation step the structure of each domain remains the same, but their relative positions change.</text>
</comment>
<comment type="similarity">
    <text evidence="1">Belongs to the RuvB family.</text>
</comment>
<sequence>MARILDNNVMGNEEFSDRTLRPQYLHEYIGQDKVKEQFAIFIEAAKRRDESLDHVLLFGPPGLGKTTMAFVIANELGVNLKQTSGPAVEKAGDLVAILNELEPGDILFIDEIHRMPMSVEEVLYSAMEDFYIDIMIGAGDTSRSIHLDLPPFTLIGATTRAGMLSNPLRARFGITGHMEYYQEKDLTEIVERTATIFEIKIDHEAARKLACRSRGTPRIANRLLKRVRDYAQIIGDGIITAQITDRALTMLDVDREGLDYIDQKILRTMIEMYQGGPVGLGTLSVNIAEERNTVEEMYEPYLIQKGFLMRTRTGRVATQKAYRHLGYPYQNT</sequence>
<dbReference type="EC" id="3.6.4.-" evidence="1"/>
<dbReference type="EMBL" id="CP000260">
    <property type="protein sequence ID" value="ABF33102.1"/>
    <property type="molecule type" value="Genomic_DNA"/>
</dbReference>
<dbReference type="RefSeq" id="WP_002986679.1">
    <property type="nucleotide sequence ID" value="NZ_CVUH01000001.1"/>
</dbReference>
<dbReference type="SMR" id="Q1JJ71"/>
<dbReference type="GeneID" id="69900018"/>
<dbReference type="KEGG" id="sph:MGAS10270_Spy0037"/>
<dbReference type="HOGENOM" id="CLU_055599_1_0_9"/>
<dbReference type="Proteomes" id="UP000002436">
    <property type="component" value="Chromosome"/>
</dbReference>
<dbReference type="GO" id="GO:0005737">
    <property type="term" value="C:cytoplasm"/>
    <property type="evidence" value="ECO:0007669"/>
    <property type="project" value="UniProtKB-SubCell"/>
</dbReference>
<dbReference type="GO" id="GO:0048476">
    <property type="term" value="C:Holliday junction resolvase complex"/>
    <property type="evidence" value="ECO:0007669"/>
    <property type="project" value="UniProtKB-UniRule"/>
</dbReference>
<dbReference type="GO" id="GO:0005524">
    <property type="term" value="F:ATP binding"/>
    <property type="evidence" value="ECO:0007669"/>
    <property type="project" value="UniProtKB-UniRule"/>
</dbReference>
<dbReference type="GO" id="GO:0016887">
    <property type="term" value="F:ATP hydrolysis activity"/>
    <property type="evidence" value="ECO:0007669"/>
    <property type="project" value="InterPro"/>
</dbReference>
<dbReference type="GO" id="GO:0000400">
    <property type="term" value="F:four-way junction DNA binding"/>
    <property type="evidence" value="ECO:0007669"/>
    <property type="project" value="UniProtKB-UniRule"/>
</dbReference>
<dbReference type="GO" id="GO:0009378">
    <property type="term" value="F:four-way junction helicase activity"/>
    <property type="evidence" value="ECO:0007669"/>
    <property type="project" value="InterPro"/>
</dbReference>
<dbReference type="GO" id="GO:0006310">
    <property type="term" value="P:DNA recombination"/>
    <property type="evidence" value="ECO:0007669"/>
    <property type="project" value="UniProtKB-UniRule"/>
</dbReference>
<dbReference type="GO" id="GO:0006281">
    <property type="term" value="P:DNA repair"/>
    <property type="evidence" value="ECO:0007669"/>
    <property type="project" value="UniProtKB-UniRule"/>
</dbReference>
<dbReference type="CDD" id="cd00009">
    <property type="entry name" value="AAA"/>
    <property type="match status" value="1"/>
</dbReference>
<dbReference type="Gene3D" id="1.10.8.60">
    <property type="match status" value="1"/>
</dbReference>
<dbReference type="Gene3D" id="3.40.50.300">
    <property type="entry name" value="P-loop containing nucleotide triphosphate hydrolases"/>
    <property type="match status" value="1"/>
</dbReference>
<dbReference type="Gene3D" id="1.10.10.10">
    <property type="entry name" value="Winged helix-like DNA-binding domain superfamily/Winged helix DNA-binding domain"/>
    <property type="match status" value="1"/>
</dbReference>
<dbReference type="HAMAP" id="MF_00016">
    <property type="entry name" value="DNA_HJ_migration_RuvB"/>
    <property type="match status" value="1"/>
</dbReference>
<dbReference type="InterPro" id="IPR003593">
    <property type="entry name" value="AAA+_ATPase"/>
</dbReference>
<dbReference type="InterPro" id="IPR041445">
    <property type="entry name" value="AAA_lid_4"/>
</dbReference>
<dbReference type="InterPro" id="IPR004605">
    <property type="entry name" value="DNA_helicase_Holl-junc_RuvB"/>
</dbReference>
<dbReference type="InterPro" id="IPR027417">
    <property type="entry name" value="P-loop_NTPase"/>
</dbReference>
<dbReference type="InterPro" id="IPR008824">
    <property type="entry name" value="RuvB-like_N"/>
</dbReference>
<dbReference type="InterPro" id="IPR008823">
    <property type="entry name" value="RuvB_C"/>
</dbReference>
<dbReference type="InterPro" id="IPR036388">
    <property type="entry name" value="WH-like_DNA-bd_sf"/>
</dbReference>
<dbReference type="InterPro" id="IPR036390">
    <property type="entry name" value="WH_DNA-bd_sf"/>
</dbReference>
<dbReference type="NCBIfam" id="NF000868">
    <property type="entry name" value="PRK00080.1"/>
    <property type="match status" value="1"/>
</dbReference>
<dbReference type="NCBIfam" id="TIGR00635">
    <property type="entry name" value="ruvB"/>
    <property type="match status" value="1"/>
</dbReference>
<dbReference type="PANTHER" id="PTHR42848">
    <property type="match status" value="1"/>
</dbReference>
<dbReference type="PANTHER" id="PTHR42848:SF1">
    <property type="entry name" value="HOLLIDAY JUNCTION BRANCH MIGRATION COMPLEX SUBUNIT RUVB"/>
    <property type="match status" value="1"/>
</dbReference>
<dbReference type="Pfam" id="PF17864">
    <property type="entry name" value="AAA_lid_4"/>
    <property type="match status" value="1"/>
</dbReference>
<dbReference type="Pfam" id="PF05491">
    <property type="entry name" value="RuvB_C"/>
    <property type="match status" value="1"/>
</dbReference>
<dbReference type="Pfam" id="PF05496">
    <property type="entry name" value="RuvB_N"/>
    <property type="match status" value="1"/>
</dbReference>
<dbReference type="SMART" id="SM00382">
    <property type="entry name" value="AAA"/>
    <property type="match status" value="1"/>
</dbReference>
<dbReference type="SUPFAM" id="SSF52540">
    <property type="entry name" value="P-loop containing nucleoside triphosphate hydrolases"/>
    <property type="match status" value="1"/>
</dbReference>
<dbReference type="SUPFAM" id="SSF46785">
    <property type="entry name" value="Winged helix' DNA-binding domain"/>
    <property type="match status" value="1"/>
</dbReference>
<protein>
    <recommendedName>
        <fullName evidence="1">Holliday junction branch migration complex subunit RuvB</fullName>
        <ecNumber evidence="1">3.6.4.-</ecNumber>
    </recommendedName>
</protein>
<name>RUVB_STRPD</name>
<evidence type="ECO:0000255" key="1">
    <source>
        <dbReference type="HAMAP-Rule" id="MF_00016"/>
    </source>
</evidence>
<proteinExistence type="inferred from homology"/>
<organism>
    <name type="scientific">Streptococcus pyogenes serotype M2 (strain MGAS10270)</name>
    <dbReference type="NCBI Taxonomy" id="370552"/>
    <lineage>
        <taxon>Bacteria</taxon>
        <taxon>Bacillati</taxon>
        <taxon>Bacillota</taxon>
        <taxon>Bacilli</taxon>
        <taxon>Lactobacillales</taxon>
        <taxon>Streptococcaceae</taxon>
        <taxon>Streptococcus</taxon>
    </lineage>
</organism>